<sequence>MAALNLSKRSICETCGHQGWKNSLVTCSKCRIACEHCYCMRESSFETSIHFVCADCSMRPVQNKFTSDSIKGVPRSIRNKVRVESSNPVPKWKKIPETSRMKLISPEEVKKLACGGSTSKPTFRVPRPVSARPPMGLTKPTAGFPRARSLNSTVVARKTKSIYLPPKKVEPLSPRTQQIRPGVMRQASKAQAVGEGSKSKVGDGAKYHDSNEICRSILSEKLLQLLPYRPALHPIWKGRIVDSATPSEFNGEFLAQPASKVRGKAYILSKAIPVLLKVKLVPIGNLLSGLFMNRKPGLSDVEMYIFPDDKNTKRFTAERDHIFEAMRIRNAMMKFNINGTPLLIFSSKLLDKSSQIIIKMQKKTNNFLWGIFLLTKKSLALLPGTSNQTPQHFDDGYVVDNDTEPFFRRYHRNCGKQLQRHYGQRD</sequence>
<organism>
    <name type="scientific">Arabidopsis thaliana</name>
    <name type="common">Mouse-ear cress</name>
    <dbReference type="NCBI Taxonomy" id="3702"/>
    <lineage>
        <taxon>Eukaryota</taxon>
        <taxon>Viridiplantae</taxon>
        <taxon>Streptophyta</taxon>
        <taxon>Embryophyta</taxon>
        <taxon>Tracheophyta</taxon>
        <taxon>Spermatophyta</taxon>
        <taxon>Magnoliopsida</taxon>
        <taxon>eudicotyledons</taxon>
        <taxon>Gunneridae</taxon>
        <taxon>Pentapetalae</taxon>
        <taxon>rosids</taxon>
        <taxon>malvids</taxon>
        <taxon>Brassicales</taxon>
        <taxon>Brassicaceae</taxon>
        <taxon>Camelineae</taxon>
        <taxon>Arabidopsis</taxon>
    </lineage>
</organism>
<protein>
    <recommendedName>
        <fullName evidence="4">PHD finger-containing protein 6</fullName>
    </recommendedName>
</protein>
<evidence type="ECO:0000255" key="1">
    <source>
        <dbReference type="PROSITE-ProRule" id="PRU00146"/>
    </source>
</evidence>
<evidence type="ECO:0000256" key="2">
    <source>
        <dbReference type="SAM" id="MobiDB-lite"/>
    </source>
</evidence>
<evidence type="ECO:0000269" key="3">
    <source>
    </source>
</evidence>
<evidence type="ECO:0000303" key="4">
    <source>
    </source>
</evidence>
<evidence type="ECO:0000305" key="5"/>
<evidence type="ECO:0000312" key="6">
    <source>
        <dbReference type="Araport" id="AT5G61120"/>
    </source>
</evidence>
<evidence type="ECO:0000312" key="7">
    <source>
        <dbReference type="EMBL" id="AED97423.1"/>
    </source>
</evidence>
<dbReference type="EMBL" id="AB006696">
    <property type="protein sequence ID" value="BAB10374.1"/>
    <property type="status" value="ALT_SEQ"/>
    <property type="molecule type" value="Genomic_DNA"/>
</dbReference>
<dbReference type="EMBL" id="CP002688">
    <property type="protein sequence ID" value="AED97423.1"/>
    <property type="molecule type" value="Genomic_DNA"/>
</dbReference>
<dbReference type="EMBL" id="BT020310">
    <property type="protein sequence ID" value="AAV85665.1"/>
    <property type="status" value="ALT_SEQ"/>
    <property type="molecule type" value="mRNA"/>
</dbReference>
<dbReference type="EMBL" id="BT020517">
    <property type="protein sequence ID" value="AAW39018.1"/>
    <property type="molecule type" value="mRNA"/>
</dbReference>
<dbReference type="RefSeq" id="NP_200920.3">
    <property type="nucleotide sequence ID" value="NM_125505.4"/>
</dbReference>
<dbReference type="GlyGen" id="F4K200">
    <property type="glycosylation" value="1 site"/>
</dbReference>
<dbReference type="iPTMnet" id="F4K200"/>
<dbReference type="PaxDb" id="3702-AT5G61120.1"/>
<dbReference type="ProteomicsDB" id="216592"/>
<dbReference type="EnsemblPlants" id="AT5G61120.1">
    <property type="protein sequence ID" value="AT5G61120.1"/>
    <property type="gene ID" value="AT5G61120"/>
</dbReference>
<dbReference type="GeneID" id="836233"/>
<dbReference type="Gramene" id="AT5G61120.1">
    <property type="protein sequence ID" value="AT5G61120.1"/>
    <property type="gene ID" value="AT5G61120"/>
</dbReference>
<dbReference type="Araport" id="AT5G61120"/>
<dbReference type="TAIR" id="AT5G61120"/>
<dbReference type="eggNOG" id="ENOG502S0JF">
    <property type="taxonomic scope" value="Eukaryota"/>
</dbReference>
<dbReference type="HOGENOM" id="CLU_031831_0_0_1"/>
<dbReference type="InParanoid" id="F4K200"/>
<dbReference type="PRO" id="PR:F4K200"/>
<dbReference type="Proteomes" id="UP000006548">
    <property type="component" value="Chromosome 5"/>
</dbReference>
<dbReference type="ExpressionAtlas" id="F4K200">
    <property type="expression patterns" value="baseline and differential"/>
</dbReference>
<dbReference type="GO" id="GO:0140566">
    <property type="term" value="F:histone reader activity"/>
    <property type="evidence" value="ECO:0007669"/>
    <property type="project" value="InterPro"/>
</dbReference>
<dbReference type="GO" id="GO:0008270">
    <property type="term" value="F:zinc ion binding"/>
    <property type="evidence" value="ECO:0007669"/>
    <property type="project" value="UniProtKB-KW"/>
</dbReference>
<dbReference type="GO" id="GO:0034244">
    <property type="term" value="P:negative regulation of transcription elongation by RNA polymerase II"/>
    <property type="evidence" value="ECO:0007669"/>
    <property type="project" value="InterPro"/>
</dbReference>
<dbReference type="InterPro" id="IPR056280">
    <property type="entry name" value="AIPP2-like_SPOC"/>
</dbReference>
<dbReference type="InterPro" id="IPR049914">
    <property type="entry name" value="PHD1-3/5-6"/>
</dbReference>
<dbReference type="PANTHER" id="PTHR33304">
    <property type="match status" value="1"/>
</dbReference>
<dbReference type="PANTHER" id="PTHR33304:SF36">
    <property type="entry name" value="GB|AAF26970.1-RELATED"/>
    <property type="match status" value="1"/>
</dbReference>
<dbReference type="Pfam" id="PF23121">
    <property type="entry name" value="SPOC_AIPP2"/>
    <property type="match status" value="1"/>
</dbReference>
<name>PHD6_ARATH</name>
<gene>
    <name evidence="4" type="primary">PHD6</name>
    <name evidence="6" type="ordered locus">At5g61120</name>
    <name evidence="7" type="ORF">MAF19.12</name>
</gene>
<reference key="1">
    <citation type="journal article" date="1997" name="DNA Res.">
        <title>Structural analysis of Arabidopsis thaliana chromosome 5. II. Sequence features of the regions of 1,044,062 bp covered by thirteen physically assigned P1 clones.</title>
        <authorList>
            <person name="Kotani H."/>
            <person name="Nakamura Y."/>
            <person name="Sato S."/>
            <person name="Kaneko T."/>
            <person name="Asamizu E."/>
            <person name="Miyajima N."/>
            <person name="Tabata S."/>
        </authorList>
    </citation>
    <scope>NUCLEOTIDE SEQUENCE [LARGE SCALE GENOMIC DNA]</scope>
    <source>
        <strain>cv. Columbia</strain>
    </source>
</reference>
<reference key="2">
    <citation type="journal article" date="2017" name="Plant J.">
        <title>Araport11: a complete reannotation of the Arabidopsis thaliana reference genome.</title>
        <authorList>
            <person name="Cheng C.Y."/>
            <person name="Krishnakumar V."/>
            <person name="Chan A.P."/>
            <person name="Thibaud-Nissen F."/>
            <person name="Schobel S."/>
            <person name="Town C.D."/>
        </authorList>
    </citation>
    <scope>GENOME REANNOTATION</scope>
    <source>
        <strain>cv. Columbia</strain>
    </source>
</reference>
<reference key="3">
    <citation type="submission" date="2004-12" db="EMBL/GenBank/DDBJ databases">
        <title>Arabidopsis ORF clones.</title>
        <authorList>
            <person name="Cheuk R.F."/>
            <person name="Chen H."/>
            <person name="Kim C.J."/>
            <person name="Shinn P."/>
            <person name="Ecker J.R."/>
        </authorList>
    </citation>
    <scope>NUCLEOTIDE SEQUENCE [LARGE SCALE MRNA] OF 71-426</scope>
    <source>
        <strain>cv. Columbia</strain>
    </source>
</reference>
<reference key="4">
    <citation type="journal article" date="2021" name="J. Integr. Plant Biol.">
        <title>A histone H3K27me3 reader cooperates with a family of PHD finger-containing proteins to regulate flowering time in Arabidopsis.</title>
        <authorList>
            <person name="Qian F."/>
            <person name="Zhao Q.-Y."/>
            <person name="Zhang T.-N."/>
            <person name="Li Y.-L."/>
            <person name="Su Y.-N."/>
            <person name="Li L."/>
            <person name="Sui J.-H."/>
            <person name="Chen S."/>
            <person name="He X.-J."/>
        </authorList>
    </citation>
    <scope>FUNCTION</scope>
    <scope>DISRUPTION PHENOTYPE</scope>
    <scope>INTERACTION WITH AIPP3/BDT1</scope>
    <source>
        <strain>cv. Columbia</strain>
    </source>
</reference>
<proteinExistence type="evidence at protein level"/>
<keyword id="KW-0479">Metal-binding</keyword>
<keyword id="KW-1185">Reference proteome</keyword>
<keyword id="KW-0804">Transcription</keyword>
<keyword id="KW-0805">Transcription regulation</keyword>
<keyword id="KW-0862">Zinc</keyword>
<keyword id="KW-0863">Zinc-finger</keyword>
<accession>F4K200</accession>
<accession>Q5PNY7</accession>
<accession>Q9FNQ3</accession>
<feature type="chain" id="PRO_0000458550" description="PHD finger-containing protein 6">
    <location>
        <begin position="1"/>
        <end position="426"/>
    </location>
</feature>
<feature type="zinc finger region" description="PHD-type" evidence="1">
    <location>
        <begin position="9"/>
        <end position="59"/>
    </location>
</feature>
<feature type="region of interest" description="Disordered" evidence="2">
    <location>
        <begin position="122"/>
        <end position="144"/>
    </location>
</feature>
<feature type="region of interest" description="Disordered" evidence="2">
    <location>
        <begin position="185"/>
        <end position="205"/>
    </location>
</feature>
<feature type="binding site" evidence="1">
    <location>
        <position position="12"/>
    </location>
    <ligand>
        <name>Zn(2+)</name>
        <dbReference type="ChEBI" id="CHEBI:29105"/>
        <label>1</label>
    </ligand>
</feature>
<feature type="binding site" evidence="1">
    <location>
        <position position="15"/>
    </location>
    <ligand>
        <name>Zn(2+)</name>
        <dbReference type="ChEBI" id="CHEBI:29105"/>
        <label>1</label>
    </ligand>
</feature>
<feature type="binding site" evidence="1">
    <location>
        <position position="27"/>
    </location>
    <ligand>
        <name>Zn(2+)</name>
        <dbReference type="ChEBI" id="CHEBI:29105"/>
        <label>2</label>
    </ligand>
</feature>
<feature type="binding site" evidence="1">
    <location>
        <position position="30"/>
    </location>
    <ligand>
        <name>Zn(2+)</name>
        <dbReference type="ChEBI" id="CHEBI:29105"/>
        <label>2</label>
    </ligand>
</feature>
<feature type="binding site" evidence="1">
    <location>
        <position position="36"/>
    </location>
    <ligand>
        <name>Zn(2+)</name>
        <dbReference type="ChEBI" id="CHEBI:29105"/>
        <label>1</label>
    </ligand>
</feature>
<feature type="binding site" evidence="1">
    <location>
        <position position="39"/>
    </location>
    <ligand>
        <name>Zn(2+)</name>
        <dbReference type="ChEBI" id="CHEBI:29105"/>
        <label>1</label>
    </ligand>
</feature>
<feature type="binding site" evidence="1">
    <location>
        <position position="53"/>
    </location>
    <ligand>
        <name>Zn(2+)</name>
        <dbReference type="ChEBI" id="CHEBI:29105"/>
        <label>2</label>
    </ligand>
</feature>
<feature type="binding site" evidence="1">
    <location>
        <position position="56"/>
    </location>
    <ligand>
        <name>Zn(2+)</name>
        <dbReference type="ChEBI" id="CHEBI:29105"/>
        <label>2</label>
    </ligand>
</feature>
<comment type="function">
    <text evidence="3">Together with AIPP3/BDT1, cooperates to form a BAH-PHD bivalent histone reader complex able to read histone H3 lysine 27 trimethylation (H3K27me3) histone marks in order to regulate transcription, especially to prevent early flowering; promotes AIPP3/BDT1 binding to H3K27me3.</text>
</comment>
<comment type="subunit">
    <text evidence="3">Interacts directly with AIPP3/BDT1.</text>
</comment>
<comment type="disruption phenotype">
    <text evidence="3">No obvious developmental defects (PubMed:33433058). Plants missing all PHD finger-containing proteins (e.g. PHD1, PAIPP2/PHD2, AIPP2/PHD3, PHD4, PHD5 and PHD6) exhibit an increased expression of flowering genes leading to an early flowering phenotype under long-day conditions as well as growth retardation (PubMed:33433058).</text>
</comment>
<comment type="sequence caution" evidence="5">
    <conflict type="erroneous initiation">
        <sequence resource="EMBL-CDS" id="AAV85665"/>
    </conflict>
    <text>Truncated N-terminus.</text>
</comment>
<comment type="sequence caution" evidence="5">
    <conflict type="erroneous gene model prediction">
        <sequence resource="EMBL-CDS" id="BAB10374"/>
    </conflict>
</comment>